<name>KPRS_BRUME</name>
<dbReference type="EC" id="2.7.6.1" evidence="1"/>
<dbReference type="EMBL" id="AE008917">
    <property type="protein sequence ID" value="AAL51664.1"/>
    <property type="status" value="ALT_INIT"/>
    <property type="molecule type" value="Genomic_DNA"/>
</dbReference>
<dbReference type="PIR" id="AE3312">
    <property type="entry name" value="AE3312"/>
</dbReference>
<dbReference type="RefSeq" id="WP_002964638.1">
    <property type="nucleotide sequence ID" value="NZ_CP007763.1"/>
</dbReference>
<dbReference type="SMR" id="Q8YIG1"/>
<dbReference type="KEGG" id="bme:BMEI0483"/>
<dbReference type="KEGG" id="bmel:DK63_939"/>
<dbReference type="PATRIC" id="fig|224914.52.peg.992"/>
<dbReference type="eggNOG" id="COG0462">
    <property type="taxonomic scope" value="Bacteria"/>
</dbReference>
<dbReference type="PhylomeDB" id="Q8YIG1"/>
<dbReference type="UniPathway" id="UPA00087">
    <property type="reaction ID" value="UER00172"/>
</dbReference>
<dbReference type="Proteomes" id="UP000000419">
    <property type="component" value="Chromosome I"/>
</dbReference>
<dbReference type="GO" id="GO:0005737">
    <property type="term" value="C:cytoplasm"/>
    <property type="evidence" value="ECO:0007669"/>
    <property type="project" value="UniProtKB-SubCell"/>
</dbReference>
<dbReference type="GO" id="GO:0002189">
    <property type="term" value="C:ribose phosphate diphosphokinase complex"/>
    <property type="evidence" value="ECO:0007669"/>
    <property type="project" value="TreeGrafter"/>
</dbReference>
<dbReference type="GO" id="GO:0005524">
    <property type="term" value="F:ATP binding"/>
    <property type="evidence" value="ECO:0007669"/>
    <property type="project" value="UniProtKB-KW"/>
</dbReference>
<dbReference type="GO" id="GO:0016301">
    <property type="term" value="F:kinase activity"/>
    <property type="evidence" value="ECO:0007669"/>
    <property type="project" value="UniProtKB-KW"/>
</dbReference>
<dbReference type="GO" id="GO:0000287">
    <property type="term" value="F:magnesium ion binding"/>
    <property type="evidence" value="ECO:0007669"/>
    <property type="project" value="UniProtKB-UniRule"/>
</dbReference>
<dbReference type="GO" id="GO:0004749">
    <property type="term" value="F:ribose phosphate diphosphokinase activity"/>
    <property type="evidence" value="ECO:0007669"/>
    <property type="project" value="UniProtKB-UniRule"/>
</dbReference>
<dbReference type="GO" id="GO:0006015">
    <property type="term" value="P:5-phosphoribose 1-diphosphate biosynthetic process"/>
    <property type="evidence" value="ECO:0007669"/>
    <property type="project" value="UniProtKB-UniRule"/>
</dbReference>
<dbReference type="GO" id="GO:0006164">
    <property type="term" value="P:purine nucleotide biosynthetic process"/>
    <property type="evidence" value="ECO:0007669"/>
    <property type="project" value="TreeGrafter"/>
</dbReference>
<dbReference type="GO" id="GO:0009156">
    <property type="term" value="P:ribonucleoside monophosphate biosynthetic process"/>
    <property type="evidence" value="ECO:0007669"/>
    <property type="project" value="InterPro"/>
</dbReference>
<dbReference type="CDD" id="cd06223">
    <property type="entry name" value="PRTases_typeI"/>
    <property type="match status" value="1"/>
</dbReference>
<dbReference type="FunFam" id="3.40.50.2020:FF:000001">
    <property type="entry name" value="Ribose-phosphate pyrophosphokinase"/>
    <property type="match status" value="1"/>
</dbReference>
<dbReference type="Gene3D" id="3.40.50.2020">
    <property type="match status" value="2"/>
</dbReference>
<dbReference type="HAMAP" id="MF_00583_B">
    <property type="entry name" value="RibP_PPkinase_B"/>
    <property type="match status" value="1"/>
</dbReference>
<dbReference type="InterPro" id="IPR000842">
    <property type="entry name" value="PRib_PP_synth_CS"/>
</dbReference>
<dbReference type="InterPro" id="IPR029099">
    <property type="entry name" value="Pribosyltran_N"/>
</dbReference>
<dbReference type="InterPro" id="IPR000836">
    <property type="entry name" value="PRibTrfase_dom"/>
</dbReference>
<dbReference type="InterPro" id="IPR029057">
    <property type="entry name" value="PRTase-like"/>
</dbReference>
<dbReference type="InterPro" id="IPR005946">
    <property type="entry name" value="Rib-P_diPkinase"/>
</dbReference>
<dbReference type="InterPro" id="IPR037515">
    <property type="entry name" value="Rib-P_diPkinase_bac"/>
</dbReference>
<dbReference type="NCBIfam" id="NF002320">
    <property type="entry name" value="PRK01259.1"/>
    <property type="match status" value="1"/>
</dbReference>
<dbReference type="NCBIfam" id="TIGR01251">
    <property type="entry name" value="ribP_PPkin"/>
    <property type="match status" value="1"/>
</dbReference>
<dbReference type="PANTHER" id="PTHR10210">
    <property type="entry name" value="RIBOSE-PHOSPHATE DIPHOSPHOKINASE FAMILY MEMBER"/>
    <property type="match status" value="1"/>
</dbReference>
<dbReference type="PANTHER" id="PTHR10210:SF41">
    <property type="entry name" value="RIBOSE-PHOSPHATE PYROPHOSPHOKINASE 1, CHLOROPLASTIC"/>
    <property type="match status" value="1"/>
</dbReference>
<dbReference type="Pfam" id="PF14572">
    <property type="entry name" value="Pribosyl_synth"/>
    <property type="match status" value="1"/>
</dbReference>
<dbReference type="Pfam" id="PF13793">
    <property type="entry name" value="Pribosyltran_N"/>
    <property type="match status" value="1"/>
</dbReference>
<dbReference type="SMART" id="SM01400">
    <property type="entry name" value="Pribosyltran_N"/>
    <property type="match status" value="1"/>
</dbReference>
<dbReference type="SUPFAM" id="SSF53271">
    <property type="entry name" value="PRTase-like"/>
    <property type="match status" value="1"/>
</dbReference>
<dbReference type="PROSITE" id="PS00114">
    <property type="entry name" value="PRPP_SYNTHASE"/>
    <property type="match status" value="1"/>
</dbReference>
<comment type="function">
    <text evidence="1">Involved in the biosynthesis of the central metabolite phospho-alpha-D-ribosyl-1-pyrophosphate (PRPP) via the transfer of pyrophosphoryl group from ATP to 1-hydroxyl of ribose-5-phosphate (Rib-5-P).</text>
</comment>
<comment type="catalytic activity">
    <reaction evidence="1">
        <text>D-ribose 5-phosphate + ATP = 5-phospho-alpha-D-ribose 1-diphosphate + AMP + H(+)</text>
        <dbReference type="Rhea" id="RHEA:15609"/>
        <dbReference type="ChEBI" id="CHEBI:15378"/>
        <dbReference type="ChEBI" id="CHEBI:30616"/>
        <dbReference type="ChEBI" id="CHEBI:58017"/>
        <dbReference type="ChEBI" id="CHEBI:78346"/>
        <dbReference type="ChEBI" id="CHEBI:456215"/>
        <dbReference type="EC" id="2.7.6.1"/>
    </reaction>
</comment>
<comment type="cofactor">
    <cofactor evidence="1">
        <name>Mg(2+)</name>
        <dbReference type="ChEBI" id="CHEBI:18420"/>
    </cofactor>
    <text evidence="1">Binds 2 Mg(2+) ions per subunit.</text>
</comment>
<comment type="pathway">
    <text evidence="1">Metabolic intermediate biosynthesis; 5-phospho-alpha-D-ribose 1-diphosphate biosynthesis; 5-phospho-alpha-D-ribose 1-diphosphate from D-ribose 5-phosphate (route I): step 1/1.</text>
</comment>
<comment type="subunit">
    <text evidence="1">Homohexamer.</text>
</comment>
<comment type="subcellular location">
    <subcellularLocation>
        <location evidence="1">Cytoplasm</location>
    </subcellularLocation>
</comment>
<comment type="similarity">
    <text evidence="1">Belongs to the ribose-phosphate pyrophosphokinase family. Class I subfamily.</text>
</comment>
<comment type="sequence caution" evidence="2">
    <conflict type="erroneous initiation">
        <sequence resource="EMBL-CDS" id="AAL51664"/>
    </conflict>
    <text>Extended N-terminus.</text>
</comment>
<feature type="chain" id="PRO_0000141116" description="Ribose-phosphate pyrophosphokinase">
    <location>
        <begin position="1"/>
        <end position="310"/>
    </location>
</feature>
<feature type="active site" evidence="1">
    <location>
        <position position="190"/>
    </location>
</feature>
<feature type="binding site" evidence="1">
    <location>
        <begin position="34"/>
        <end position="36"/>
    </location>
    <ligand>
        <name>ATP</name>
        <dbReference type="ChEBI" id="CHEBI:30616"/>
    </ligand>
</feature>
<feature type="binding site" evidence="1">
    <location>
        <begin position="93"/>
        <end position="94"/>
    </location>
    <ligand>
        <name>ATP</name>
        <dbReference type="ChEBI" id="CHEBI:30616"/>
    </ligand>
</feature>
<feature type="binding site" evidence="1">
    <location>
        <position position="127"/>
    </location>
    <ligand>
        <name>Mg(2+)</name>
        <dbReference type="ChEBI" id="CHEBI:18420"/>
        <label>1</label>
    </ligand>
</feature>
<feature type="binding site" evidence="1">
    <location>
        <position position="167"/>
    </location>
    <ligand>
        <name>Mg(2+)</name>
        <dbReference type="ChEBI" id="CHEBI:18420"/>
        <label>2</label>
    </ligand>
</feature>
<feature type="binding site" evidence="1">
    <location>
        <position position="192"/>
    </location>
    <ligand>
        <name>D-ribose 5-phosphate</name>
        <dbReference type="ChEBI" id="CHEBI:78346"/>
    </ligand>
</feature>
<feature type="binding site" evidence="1">
    <location>
        <position position="216"/>
    </location>
    <ligand>
        <name>D-ribose 5-phosphate</name>
        <dbReference type="ChEBI" id="CHEBI:78346"/>
    </ligand>
</feature>
<feature type="binding site" evidence="1">
    <location>
        <begin position="220"/>
        <end position="224"/>
    </location>
    <ligand>
        <name>D-ribose 5-phosphate</name>
        <dbReference type="ChEBI" id="CHEBI:78346"/>
    </ligand>
</feature>
<reference key="1">
    <citation type="journal article" date="2002" name="Proc. Natl. Acad. Sci. U.S.A.">
        <title>The genome sequence of the facultative intracellular pathogen Brucella melitensis.</title>
        <authorList>
            <person name="DelVecchio V.G."/>
            <person name="Kapatral V."/>
            <person name="Redkar R.J."/>
            <person name="Patra G."/>
            <person name="Mujer C."/>
            <person name="Los T."/>
            <person name="Ivanova N."/>
            <person name="Anderson I."/>
            <person name="Bhattacharyya A."/>
            <person name="Lykidis A."/>
            <person name="Reznik G."/>
            <person name="Jablonski L."/>
            <person name="Larsen N."/>
            <person name="D'Souza M."/>
            <person name="Bernal A."/>
            <person name="Mazur M."/>
            <person name="Goltsman E."/>
            <person name="Selkov E."/>
            <person name="Elzer P.H."/>
            <person name="Hagius S."/>
            <person name="O'Callaghan D."/>
            <person name="Letesson J.-J."/>
            <person name="Haselkorn R."/>
            <person name="Kyrpides N.C."/>
            <person name="Overbeek R."/>
        </authorList>
    </citation>
    <scope>NUCLEOTIDE SEQUENCE [LARGE SCALE GENOMIC DNA]</scope>
    <source>
        <strain>ATCC 23456 / CCUG 17765 / NCTC 10094 / 16M</strain>
    </source>
</reference>
<protein>
    <recommendedName>
        <fullName evidence="1">Ribose-phosphate pyrophosphokinase</fullName>
        <shortName evidence="1">RPPK</shortName>
        <ecNumber evidence="1">2.7.6.1</ecNumber>
    </recommendedName>
    <alternativeName>
        <fullName evidence="1">5-phospho-D-ribosyl alpha-1-diphosphate synthase</fullName>
    </alternativeName>
    <alternativeName>
        <fullName evidence="1">Phosphoribosyl diphosphate synthase</fullName>
    </alternativeName>
    <alternativeName>
        <fullName evidence="1">Phosphoribosyl pyrophosphate synthase</fullName>
        <shortName evidence="1">P-Rib-PP synthase</shortName>
        <shortName evidence="1">PRPP synthase</shortName>
        <shortName evidence="1">PRPPase</shortName>
    </alternativeName>
</protein>
<gene>
    <name evidence="1" type="primary">prs</name>
    <name type="ordered locus">BMEI0483</name>
</gene>
<sequence>MKLFAGNSNRVLAESVAQYLNIPLGKASVRRFADQEIFVEIQENVRGEDVFVLQSTSYPANDHLMELLIMIDAFRRSSARRITAVLPYFGYARQDRKPGPRTPISAKLVANLITEAGASRVLTLDLHAGQIQGFFDIPTDNLYAVPVIARDVKANYATGNCMVVSPDVGGVVRARSLAKRIDAQLAIVDKRRERPGESEVMNVIGDVSGKDCLLFDDIVDSGGTLCNAAEALLNKGANSVTAYITHGVLSGGAVARIASSKLKELVITDSIQPTTAINDAPNIRVLSISDLIGEAIARTAAEESVSSLFD</sequence>
<proteinExistence type="inferred from homology"/>
<accession>Q8YIG1</accession>
<evidence type="ECO:0000255" key="1">
    <source>
        <dbReference type="HAMAP-Rule" id="MF_00583"/>
    </source>
</evidence>
<evidence type="ECO:0000305" key="2"/>
<organism>
    <name type="scientific">Brucella melitensis biotype 1 (strain ATCC 23456 / CCUG 17765 / NCTC 10094 / 16M)</name>
    <dbReference type="NCBI Taxonomy" id="224914"/>
    <lineage>
        <taxon>Bacteria</taxon>
        <taxon>Pseudomonadati</taxon>
        <taxon>Pseudomonadota</taxon>
        <taxon>Alphaproteobacteria</taxon>
        <taxon>Hyphomicrobiales</taxon>
        <taxon>Brucellaceae</taxon>
        <taxon>Brucella/Ochrobactrum group</taxon>
        <taxon>Brucella</taxon>
    </lineage>
</organism>
<keyword id="KW-0067">ATP-binding</keyword>
<keyword id="KW-0963">Cytoplasm</keyword>
<keyword id="KW-0418">Kinase</keyword>
<keyword id="KW-0460">Magnesium</keyword>
<keyword id="KW-0479">Metal-binding</keyword>
<keyword id="KW-0545">Nucleotide biosynthesis</keyword>
<keyword id="KW-0547">Nucleotide-binding</keyword>
<keyword id="KW-0808">Transferase</keyword>